<accession>Q74HE9</accession>
<dbReference type="EC" id="3.4.19.3" evidence="1"/>
<dbReference type="EMBL" id="AE017198">
    <property type="protein sequence ID" value="AAS09743.1"/>
    <property type="molecule type" value="Genomic_DNA"/>
</dbReference>
<dbReference type="RefSeq" id="WP_011162579.1">
    <property type="nucleotide sequence ID" value="NC_005362.1"/>
</dbReference>
<dbReference type="SMR" id="Q74HE9"/>
<dbReference type="MEROPS" id="C15.001"/>
<dbReference type="GeneID" id="83571227"/>
<dbReference type="KEGG" id="ljo:LJ_1798"/>
<dbReference type="PATRIC" id="fig|257314.6.peg.1799"/>
<dbReference type="eggNOG" id="COG2039">
    <property type="taxonomic scope" value="Bacteria"/>
</dbReference>
<dbReference type="HOGENOM" id="CLU_043960_4_0_9"/>
<dbReference type="Proteomes" id="UP000000581">
    <property type="component" value="Chromosome"/>
</dbReference>
<dbReference type="GO" id="GO:0005829">
    <property type="term" value="C:cytosol"/>
    <property type="evidence" value="ECO:0007669"/>
    <property type="project" value="InterPro"/>
</dbReference>
<dbReference type="GO" id="GO:0016920">
    <property type="term" value="F:pyroglutamyl-peptidase activity"/>
    <property type="evidence" value="ECO:0007669"/>
    <property type="project" value="UniProtKB-UniRule"/>
</dbReference>
<dbReference type="GO" id="GO:0006508">
    <property type="term" value="P:proteolysis"/>
    <property type="evidence" value="ECO:0007669"/>
    <property type="project" value="UniProtKB-KW"/>
</dbReference>
<dbReference type="CDD" id="cd00501">
    <property type="entry name" value="Peptidase_C15"/>
    <property type="match status" value="1"/>
</dbReference>
<dbReference type="FunFam" id="3.40.630.20:FF:000001">
    <property type="entry name" value="Pyrrolidone-carboxylate peptidase"/>
    <property type="match status" value="1"/>
</dbReference>
<dbReference type="Gene3D" id="3.40.630.20">
    <property type="entry name" value="Peptidase C15, pyroglutamyl peptidase I-like"/>
    <property type="match status" value="1"/>
</dbReference>
<dbReference type="HAMAP" id="MF_00417">
    <property type="entry name" value="Pyrrolid_peptidase"/>
    <property type="match status" value="1"/>
</dbReference>
<dbReference type="InterPro" id="IPR000816">
    <property type="entry name" value="Peptidase_C15"/>
</dbReference>
<dbReference type="InterPro" id="IPR016125">
    <property type="entry name" value="Peptidase_C15-like"/>
</dbReference>
<dbReference type="InterPro" id="IPR036440">
    <property type="entry name" value="Peptidase_C15-like_sf"/>
</dbReference>
<dbReference type="InterPro" id="IPR029762">
    <property type="entry name" value="PGP-I_bact-type"/>
</dbReference>
<dbReference type="InterPro" id="IPR033694">
    <property type="entry name" value="PGPEP1_Cys_AS"/>
</dbReference>
<dbReference type="InterPro" id="IPR033693">
    <property type="entry name" value="PGPEP1_Glu_AS"/>
</dbReference>
<dbReference type="NCBIfam" id="NF009676">
    <property type="entry name" value="PRK13197.1"/>
    <property type="match status" value="1"/>
</dbReference>
<dbReference type="NCBIfam" id="TIGR00504">
    <property type="entry name" value="pyro_pdase"/>
    <property type="match status" value="1"/>
</dbReference>
<dbReference type="PANTHER" id="PTHR23402">
    <property type="entry name" value="PROTEASE FAMILY C15 PYROGLUTAMYL-PEPTIDASE I-RELATED"/>
    <property type="match status" value="1"/>
</dbReference>
<dbReference type="PANTHER" id="PTHR23402:SF1">
    <property type="entry name" value="PYROGLUTAMYL-PEPTIDASE I"/>
    <property type="match status" value="1"/>
</dbReference>
<dbReference type="Pfam" id="PF01470">
    <property type="entry name" value="Peptidase_C15"/>
    <property type="match status" value="1"/>
</dbReference>
<dbReference type="PIRSF" id="PIRSF015592">
    <property type="entry name" value="Prld-crbxl_pptds"/>
    <property type="match status" value="1"/>
</dbReference>
<dbReference type="PRINTS" id="PR00706">
    <property type="entry name" value="PYROGLUPTASE"/>
</dbReference>
<dbReference type="SUPFAM" id="SSF53182">
    <property type="entry name" value="Pyrrolidone carboxyl peptidase (pyroglutamate aminopeptidase)"/>
    <property type="match status" value="1"/>
</dbReference>
<dbReference type="PROSITE" id="PS01334">
    <property type="entry name" value="PYRASE_CYS"/>
    <property type="match status" value="1"/>
</dbReference>
<dbReference type="PROSITE" id="PS01333">
    <property type="entry name" value="PYRASE_GLU"/>
    <property type="match status" value="1"/>
</dbReference>
<reference key="1">
    <citation type="journal article" date="2004" name="Proc. Natl. Acad. Sci. U.S.A.">
        <title>The genome sequence of the probiotic intestinal bacterium Lactobacillus johnsonii NCC 533.</title>
        <authorList>
            <person name="Pridmore R.D."/>
            <person name="Berger B."/>
            <person name="Desiere F."/>
            <person name="Vilanova D."/>
            <person name="Barretto C."/>
            <person name="Pittet A.-C."/>
            <person name="Zwahlen M.-C."/>
            <person name="Rouvet M."/>
            <person name="Altermann E."/>
            <person name="Barrangou R."/>
            <person name="Mollet B."/>
            <person name="Mercenier A."/>
            <person name="Klaenhammer T."/>
            <person name="Arigoni F."/>
            <person name="Schell M.A."/>
        </authorList>
    </citation>
    <scope>NUCLEOTIDE SEQUENCE [LARGE SCALE GENOMIC DNA]</scope>
    <source>
        <strain>CNCM I-1225 / La1 / NCC 533</strain>
    </source>
</reference>
<organism>
    <name type="scientific">Lactobacillus johnsonii (strain CNCM I-12250 / La1 / NCC 533)</name>
    <dbReference type="NCBI Taxonomy" id="257314"/>
    <lineage>
        <taxon>Bacteria</taxon>
        <taxon>Bacillati</taxon>
        <taxon>Bacillota</taxon>
        <taxon>Bacilli</taxon>
        <taxon>Lactobacillales</taxon>
        <taxon>Lactobacillaceae</taxon>
        <taxon>Lactobacillus</taxon>
    </lineage>
</organism>
<gene>
    <name evidence="1" type="primary">pcp</name>
    <name type="ordered locus">LJ_1798</name>
</gene>
<comment type="function">
    <text evidence="1">Removes 5-oxoproline from various penultimate amino acid residues except L-proline.</text>
</comment>
<comment type="catalytic activity">
    <reaction evidence="1">
        <text>Release of an N-terminal pyroglutamyl group from a polypeptide, the second amino acid generally not being Pro.</text>
        <dbReference type="EC" id="3.4.19.3"/>
    </reaction>
</comment>
<comment type="subunit">
    <text evidence="1">Homotetramer.</text>
</comment>
<comment type="subcellular location">
    <subcellularLocation>
        <location evidence="1">Cytoplasm</location>
    </subcellularLocation>
</comment>
<comment type="similarity">
    <text evidence="1">Belongs to the peptidase C15 family.</text>
</comment>
<keyword id="KW-0963">Cytoplasm</keyword>
<keyword id="KW-0378">Hydrolase</keyword>
<keyword id="KW-0645">Protease</keyword>
<keyword id="KW-0788">Thiol protease</keyword>
<sequence length="215" mass="23289">MKILVTGFDPFGGDKINPAIEAVKRLPAEINGAEIIKLEIPTVFNKSAEVVKKAIEKEKPDYVLNVGQAGGRFGLTPERVAININDGRIPDNEGYQPLGEPIHEDGETAYFTQLPIKAEAKAIRDAGLPASVSNTAGTYVCNHIMYQVQYMRDKEFPNIKAGFIHIPFLPEQVVNRPNTPSMALGDIVKGLTAALSAIVERDGKGDIKAVEGANH</sequence>
<feature type="chain" id="PRO_0000184721" description="Pyrrolidone-carboxylate peptidase">
    <location>
        <begin position="1"/>
        <end position="215"/>
    </location>
</feature>
<feature type="active site" evidence="1">
    <location>
        <position position="78"/>
    </location>
</feature>
<feature type="active site" evidence="1">
    <location>
        <position position="141"/>
    </location>
</feature>
<feature type="active site" evidence="1">
    <location>
        <position position="165"/>
    </location>
</feature>
<proteinExistence type="inferred from homology"/>
<evidence type="ECO:0000255" key="1">
    <source>
        <dbReference type="HAMAP-Rule" id="MF_00417"/>
    </source>
</evidence>
<protein>
    <recommendedName>
        <fullName evidence="1">Pyrrolidone-carboxylate peptidase</fullName>
        <ecNumber evidence="1">3.4.19.3</ecNumber>
    </recommendedName>
    <alternativeName>
        <fullName evidence="1">5-oxoprolyl-peptidase</fullName>
    </alternativeName>
    <alternativeName>
        <fullName evidence="1">Pyroglutamyl-peptidase I</fullName>
        <shortName evidence="1">PGP-I</shortName>
        <shortName evidence="1">Pyrase</shortName>
    </alternativeName>
</protein>
<name>PCP_LACJO</name>